<accession>G3FNQ9</accession>
<accession>P83290</accession>
<accession>Q00226</accession>
<accession>Q6SZH4</accession>
<accession>Q8NJT9</accession>
<evidence type="ECO:0000250" key="1"/>
<evidence type="ECO:0000255" key="2"/>
<evidence type="ECO:0000255" key="3">
    <source>
        <dbReference type="PROSITE-ProRule" id="PRU01240"/>
    </source>
</evidence>
<evidence type="ECO:0000269" key="4">
    <source ref="1"/>
</evidence>
<evidence type="ECO:0000305" key="5"/>
<proteinExistence type="evidence at protein level"/>
<protein>
    <recommendedName>
        <fullName>Cuticle-degrading serine protease</fullName>
        <ecNumber>3.4.21.-</ecNumber>
    </recommendedName>
    <alternativeName>
        <fullName>Neutral serine protease Aoz1</fullName>
        <shortName>Aoz</shortName>
    </alternativeName>
    <alternativeName>
        <fullName>PII</fullName>
    </alternativeName>
</protein>
<name>SPAZ_ORBOL</name>
<dbReference type="EC" id="3.4.21.-"/>
<dbReference type="EMBL" id="AF516146">
    <property type="protein sequence ID" value="AAM93666.1"/>
    <property type="molecule type" value="mRNA"/>
</dbReference>
<dbReference type="EMBL" id="JF747254">
    <property type="protein sequence ID" value="AEO44978.1"/>
    <property type="molecule type" value="Genomic_DNA"/>
</dbReference>
<dbReference type="EMBL" id="AY444597">
    <property type="protein sequence ID" value="AAR19138.1"/>
    <property type="molecule type" value="Genomic_DNA"/>
</dbReference>
<dbReference type="SMR" id="G3FNQ9"/>
<dbReference type="MEROPS" id="S08.120"/>
<dbReference type="GO" id="GO:0005576">
    <property type="term" value="C:extracellular region"/>
    <property type="evidence" value="ECO:0007669"/>
    <property type="project" value="UniProtKB-SubCell"/>
</dbReference>
<dbReference type="GO" id="GO:0004252">
    <property type="term" value="F:serine-type endopeptidase activity"/>
    <property type="evidence" value="ECO:0007669"/>
    <property type="project" value="InterPro"/>
</dbReference>
<dbReference type="GO" id="GO:0030574">
    <property type="term" value="P:collagen catabolic process"/>
    <property type="evidence" value="ECO:0007669"/>
    <property type="project" value="UniProtKB-KW"/>
</dbReference>
<dbReference type="GO" id="GO:0006508">
    <property type="term" value="P:proteolysis"/>
    <property type="evidence" value="ECO:0007669"/>
    <property type="project" value="UniProtKB-KW"/>
</dbReference>
<dbReference type="CDD" id="cd04077">
    <property type="entry name" value="Peptidases_S8_PCSK9_ProteinaseK_like"/>
    <property type="match status" value="1"/>
</dbReference>
<dbReference type="FunFam" id="3.40.50.200:FF:000014">
    <property type="entry name" value="Proteinase K"/>
    <property type="match status" value="1"/>
</dbReference>
<dbReference type="Gene3D" id="3.30.70.80">
    <property type="entry name" value="Peptidase S8 propeptide/proteinase inhibitor I9"/>
    <property type="match status" value="1"/>
</dbReference>
<dbReference type="Gene3D" id="3.40.50.200">
    <property type="entry name" value="Peptidase S8/S53 domain"/>
    <property type="match status" value="1"/>
</dbReference>
<dbReference type="InterPro" id="IPR034193">
    <property type="entry name" value="PCSK9_ProteinaseK-like"/>
</dbReference>
<dbReference type="InterPro" id="IPR000209">
    <property type="entry name" value="Peptidase_S8/S53_dom"/>
</dbReference>
<dbReference type="InterPro" id="IPR036852">
    <property type="entry name" value="Peptidase_S8/S53_dom_sf"/>
</dbReference>
<dbReference type="InterPro" id="IPR023827">
    <property type="entry name" value="Peptidase_S8_Asp-AS"/>
</dbReference>
<dbReference type="InterPro" id="IPR022398">
    <property type="entry name" value="Peptidase_S8_His-AS"/>
</dbReference>
<dbReference type="InterPro" id="IPR023828">
    <property type="entry name" value="Peptidase_S8_Ser-AS"/>
</dbReference>
<dbReference type="InterPro" id="IPR050131">
    <property type="entry name" value="Peptidase_S8_subtilisin-like"/>
</dbReference>
<dbReference type="InterPro" id="IPR015500">
    <property type="entry name" value="Peptidase_S8_subtilisin-rel"/>
</dbReference>
<dbReference type="InterPro" id="IPR010259">
    <property type="entry name" value="S8pro/Inhibitor_I9"/>
</dbReference>
<dbReference type="InterPro" id="IPR037045">
    <property type="entry name" value="S8pro/Inhibitor_I9_sf"/>
</dbReference>
<dbReference type="PANTHER" id="PTHR43806:SF11">
    <property type="entry name" value="CEREVISIN-RELATED"/>
    <property type="match status" value="1"/>
</dbReference>
<dbReference type="PANTHER" id="PTHR43806">
    <property type="entry name" value="PEPTIDASE S8"/>
    <property type="match status" value="1"/>
</dbReference>
<dbReference type="Pfam" id="PF05922">
    <property type="entry name" value="Inhibitor_I9"/>
    <property type="match status" value="1"/>
</dbReference>
<dbReference type="Pfam" id="PF00082">
    <property type="entry name" value="Peptidase_S8"/>
    <property type="match status" value="1"/>
</dbReference>
<dbReference type="PRINTS" id="PR00723">
    <property type="entry name" value="SUBTILISIN"/>
</dbReference>
<dbReference type="SUPFAM" id="SSF54897">
    <property type="entry name" value="Protease propeptides/inhibitors"/>
    <property type="match status" value="1"/>
</dbReference>
<dbReference type="SUPFAM" id="SSF52743">
    <property type="entry name" value="Subtilisin-like"/>
    <property type="match status" value="1"/>
</dbReference>
<dbReference type="PROSITE" id="PS51892">
    <property type="entry name" value="SUBTILASE"/>
    <property type="match status" value="1"/>
</dbReference>
<dbReference type="PROSITE" id="PS00136">
    <property type="entry name" value="SUBTILASE_ASP"/>
    <property type="match status" value="1"/>
</dbReference>
<dbReference type="PROSITE" id="PS00137">
    <property type="entry name" value="SUBTILASE_HIS"/>
    <property type="match status" value="1"/>
</dbReference>
<dbReference type="PROSITE" id="PS00138">
    <property type="entry name" value="SUBTILASE_SER"/>
    <property type="match status" value="1"/>
</dbReference>
<keyword id="KW-0177">Collagen degradation</keyword>
<keyword id="KW-0903">Direct protein sequencing</keyword>
<keyword id="KW-0325">Glycoprotein</keyword>
<keyword id="KW-0378">Hydrolase</keyword>
<keyword id="KW-0645">Protease</keyword>
<keyword id="KW-0964">Secreted</keyword>
<keyword id="KW-0720">Serine protease</keyword>
<keyword id="KW-0732">Signal</keyword>
<keyword id="KW-0865">Zymogen</keyword>
<organism>
    <name type="scientific">Orbilia oligospora</name>
    <name type="common">Nematode-trapping fungus</name>
    <name type="synonym">Arthrobotrys oligospora</name>
    <dbReference type="NCBI Taxonomy" id="2813651"/>
    <lineage>
        <taxon>Eukaryota</taxon>
        <taxon>Fungi</taxon>
        <taxon>Dikarya</taxon>
        <taxon>Ascomycota</taxon>
        <taxon>Pezizomycotina</taxon>
        <taxon>Orbiliomycetes</taxon>
        <taxon>Orbiliales</taxon>
        <taxon>Orbiliaceae</taxon>
        <taxon>Orbilia</taxon>
    </lineage>
</organism>
<feature type="signal peptide" evidence="2">
    <location>
        <begin position="1"/>
        <end position="21"/>
    </location>
</feature>
<feature type="propeptide" id="PRO_0000415374" evidence="4">
    <location>
        <begin position="22"/>
        <end position="123"/>
    </location>
</feature>
<feature type="chain" id="PRO_0000415342" description="Cuticle-degrading serine protease">
    <location>
        <begin position="124"/>
        <end position="426"/>
    </location>
</feature>
<feature type="domain" description="Inhibitor I9" evidence="2">
    <location>
        <begin position="39"/>
        <end position="122"/>
    </location>
</feature>
<feature type="domain" description="Peptidase S8" evidence="3">
    <location>
        <begin position="130"/>
        <end position="426"/>
    </location>
</feature>
<feature type="active site" description="Charge relay system" evidence="3">
    <location>
        <position position="164"/>
    </location>
</feature>
<feature type="active site" description="Charge relay system" evidence="3">
    <location>
        <position position="200"/>
    </location>
</feature>
<feature type="active site" description="Charge relay system" evidence="3">
    <location>
        <position position="353"/>
    </location>
</feature>
<feature type="glycosylation site" description="N-linked (GlcNAc...) asparagine" evidence="2">
    <location>
        <position position="178"/>
    </location>
</feature>
<feature type="glycosylation site" description="N-linked (GlcNAc...) asparagine" evidence="2">
    <location>
        <position position="252"/>
    </location>
</feature>
<feature type="sequence variant" description="In strain: XA.">
    <original>S</original>
    <variation>N</variation>
    <location>
        <position position="51"/>
    </location>
</feature>
<feature type="sequence variant" description="In strain: XA.">
    <original>T</original>
    <variation>A</variation>
    <location>
        <position position="266"/>
    </location>
</feature>
<feature type="sequence variant" description="In strain: XA.">
    <original>A</original>
    <variation>S</variation>
    <location>
        <position position="270"/>
    </location>
</feature>
<feature type="sequence variant" description="In strain: XA.">
    <original>C</original>
    <variation>S</variation>
    <location>
        <position position="274"/>
    </location>
</feature>
<feature type="sequence variant" description="In strain: XA.">
    <original>L</original>
    <variation>F</variation>
    <location>
        <position position="319"/>
    </location>
</feature>
<feature type="sequence variant" description="In strain: XA.">
    <original>T</original>
    <variation>I</variation>
    <location>
        <position position="378"/>
    </location>
</feature>
<feature type="sequence variant" description="In strain: XA.">
    <original>P</original>
    <variation>S</variation>
    <location>
        <position position="400"/>
    </location>
</feature>
<feature type="sequence variant" description="In strain: XA.">
    <original>S</original>
    <variation>N</variation>
    <location>
        <position position="411"/>
    </location>
</feature>
<feature type="sequence variant" description="In strain: XA.">
    <original>T</original>
    <variation>A</variation>
    <location>
        <position position="422"/>
    </location>
</feature>
<reference key="1">
    <citation type="journal article" date="2004" name="Mycologia">
        <title>Characterization of a neutral serine protease and its full-length cDNA from the nematode-trapping fungus Arthrobothrys oligospora.</title>
        <authorList>
            <person name="Zhao M.L."/>
            <person name="Zhang K.Q."/>
        </authorList>
        <dbReference type="AGRICOLA" id="IND43623331"/>
    </citation>
    <scope>NUCLEOTIDE SEQUENCE [MRNA]</scope>
    <scope>PROTEIN SEQUENCE OF 124-143</scope>
    <scope>FUNCTION</scope>
    <scope>ACTIVITY REGULATION</scope>
    <scope>BIOPHYSICOCHEMICAL PROPERTIES</scope>
    <source>
        <strain>807</strain>
    </source>
</reference>
<reference key="2">
    <citation type="submission" date="2011-03" db="EMBL/GenBank/DDBJ databases">
        <title>Characterization of a neutral serine protease and its full-length cDNA from the nematode-trapping fungus Arthrobothrys oligospora strain XA.</title>
        <authorList>
            <person name="Wang J."/>
            <person name="Wang W."/>
            <person name="Meng Q."/>
            <person name="Qiao J."/>
        </authorList>
    </citation>
    <scope>NUCLEOTIDE SEQUENCE [GENOMIC DNA]</scope>
    <source>
        <strain>XA</strain>
    </source>
</reference>
<reference key="3">
    <citation type="journal article" date="2004" name="Mycol. Res.">
        <title>Low genetic diversity among isolates of the nematode-trapping fungus Duddingtonia flagrans: evidence for recent worldwide dispersion from a single common ancestor.</title>
        <authorList>
            <person name="Ahren D."/>
            <person name="Faedo M."/>
            <person name="Rajashekar B."/>
            <person name="Tunlid A."/>
        </authorList>
    </citation>
    <scope>NUCLEOTIDE SEQUENCE [GENOMIC DNA] OF 115-215</scope>
    <source>
        <strain>Mankau4</strain>
    </source>
</reference>
<comment type="function">
    <text evidence="4">Hydrolyzes gelatin, casein, the chromogenic substrate azocoll and the cuticle of the nematode P.redivivus. Immobilizes P.redivivus.</text>
</comment>
<comment type="activity regulation">
    <text evidence="4">Inhibited by PMSF, SSI, the peptide Phe-Val and by Phe, but not by EDTA.</text>
</comment>
<comment type="biophysicochemical properties">
    <phDependence>
        <text evidence="4">Optimum pH is 6-8.</text>
    </phDependence>
    <temperatureDependence>
        <text evidence="4">Optimum temperature is 45 degrees Celsius.</text>
    </temperatureDependence>
</comment>
<comment type="subcellular location">
    <subcellularLocation>
        <location evidence="1">Secreted</location>
    </subcellularLocation>
</comment>
<comment type="induction">
    <text>By easily metabolized forms of nitrogen, including ammonia, nitrate and amino acids, and by glucose.</text>
</comment>
<comment type="similarity">
    <text evidence="5">Belongs to the peptidase S8 family.</text>
</comment>
<sequence>MLTNGLISLLAIAGLATNAFAGPIRKVSNAGAAGAIADKYIVVLKKGLSDSAVSKHTNRISSFHSNVARDLTGARAHGVGRKFRFSSTGFNGYVGGFDKATLQEILNSPEVDYVEQDTVVTTYAEQTDSTWGLDRISHEDYSAPYTYEYDETAAGAGTTVYVIDTGIRISHDEFQTVNGSSRATWGFNSVDKTDSDGNGHGTHCAGTIAGKTYGVSKKAKVVAVKVLSAGGSGSTAGVVSGMNWVAENATPNFSVASMSLGGSKSTALNAAVDCIFNAGITIVVAAGNENQDAKNVSPASAPNAITVGAIDSSNKIASLSNWGTLIDVFAPGVGVLSSWATSDKETKTISGTSMACPHVAGLAAYYISASEGGADPATITDKITSSRRQWSGHREHPWLPKQDRLQRICLSTHSPKTNHQVTIVAS</sequence>